<sequence length="116" mass="12767">MCDQTKHSKCCPAKGNQCCPPQQNQCCQSKGNQCCPPKQNQCCQPKGSQCCPPKHNHCCQPKPPCCIQARCCGLETKPEVSPLNMESEPNSPQTQDKGCQTQQQPHSPQNESRPSK</sequence>
<accession>P49901</accession>
<accession>Q96A42</accession>
<dbReference type="EMBL" id="X89960">
    <property type="protein sequence ID" value="CAA62000.1"/>
    <property type="molecule type" value="mRNA"/>
</dbReference>
<dbReference type="EMBL" id="X89961">
    <property type="protein sequence ID" value="CAD56487.1"/>
    <property type="molecule type" value="Genomic_DNA"/>
</dbReference>
<dbReference type="EMBL" id="BC014593">
    <property type="protein sequence ID" value="AAH14593.1"/>
    <property type="molecule type" value="mRNA"/>
</dbReference>
<dbReference type="EMBL" id="BC016744">
    <property type="protein sequence ID" value="AAH16744.1"/>
    <property type="molecule type" value="mRNA"/>
</dbReference>
<dbReference type="CCDS" id="CCDS1029.1"/>
<dbReference type="RefSeq" id="NP_109588.2">
    <property type="nucleotide sequence ID" value="NM_030663.2"/>
</dbReference>
<dbReference type="SMR" id="P49901"/>
<dbReference type="BioGRID" id="110350">
    <property type="interactions" value="81"/>
</dbReference>
<dbReference type="FunCoup" id="P49901">
    <property type="interactions" value="36"/>
</dbReference>
<dbReference type="IntAct" id="P49901">
    <property type="interactions" value="71"/>
</dbReference>
<dbReference type="STRING" id="9606.ENSP00000357754"/>
<dbReference type="PhosphoSitePlus" id="P49901"/>
<dbReference type="BioMuta" id="SMCP"/>
<dbReference type="MassIVE" id="P49901"/>
<dbReference type="PaxDb" id="9606-ENSP00000357754"/>
<dbReference type="PeptideAtlas" id="P49901"/>
<dbReference type="ProteomicsDB" id="56173"/>
<dbReference type="Antibodypedia" id="34107">
    <property type="antibodies" value="210 antibodies from 23 providers"/>
</dbReference>
<dbReference type="DNASU" id="4184"/>
<dbReference type="Ensembl" id="ENST00000368765.4">
    <property type="protein sequence ID" value="ENSP00000357754.3"/>
    <property type="gene ID" value="ENSG00000163206.6"/>
</dbReference>
<dbReference type="GeneID" id="4184"/>
<dbReference type="KEGG" id="hsa:4184"/>
<dbReference type="MANE-Select" id="ENST00000368765.4">
    <property type="protein sequence ID" value="ENSP00000357754.3"/>
    <property type="RefSeq nucleotide sequence ID" value="NM_030663.3"/>
    <property type="RefSeq protein sequence ID" value="NP_109588.2"/>
</dbReference>
<dbReference type="AGR" id="HGNC:6962"/>
<dbReference type="CTD" id="4184"/>
<dbReference type="DisGeNET" id="4184"/>
<dbReference type="GeneCards" id="SMCP"/>
<dbReference type="HGNC" id="HGNC:6962">
    <property type="gene designation" value="SMCP"/>
</dbReference>
<dbReference type="HPA" id="ENSG00000163206">
    <property type="expression patterns" value="Tissue enriched (testis)"/>
</dbReference>
<dbReference type="MIM" id="601148">
    <property type="type" value="gene"/>
</dbReference>
<dbReference type="neXtProt" id="NX_P49901"/>
<dbReference type="OpenTargets" id="ENSG00000163206"/>
<dbReference type="PharmGKB" id="PA30710"/>
<dbReference type="VEuPathDB" id="HostDB:ENSG00000163206"/>
<dbReference type="eggNOG" id="ENOG502TDSM">
    <property type="taxonomic scope" value="Eukaryota"/>
</dbReference>
<dbReference type="GeneTree" id="ENSGT00440000039991"/>
<dbReference type="HOGENOM" id="CLU_169086_0_0_1"/>
<dbReference type="InParanoid" id="P49901"/>
<dbReference type="OMA" id="PQKSPCC"/>
<dbReference type="OrthoDB" id="9533410at2759"/>
<dbReference type="PAN-GO" id="P49901">
    <property type="GO annotations" value="0 GO annotations based on evolutionary models"/>
</dbReference>
<dbReference type="PhylomeDB" id="P49901"/>
<dbReference type="PathwayCommons" id="P49901"/>
<dbReference type="SignaLink" id="P49901"/>
<dbReference type="BioGRID-ORCS" id="4184">
    <property type="hits" value="13 hits in 1150 CRISPR screens"/>
</dbReference>
<dbReference type="ChiTaRS" id="SMCP">
    <property type="organism name" value="human"/>
</dbReference>
<dbReference type="GeneWiki" id="SMCP"/>
<dbReference type="GenomeRNAi" id="4184"/>
<dbReference type="Pharos" id="P49901">
    <property type="development level" value="Tbio"/>
</dbReference>
<dbReference type="PRO" id="PR:P49901"/>
<dbReference type="Proteomes" id="UP000005640">
    <property type="component" value="Chromosome 1"/>
</dbReference>
<dbReference type="RNAct" id="P49901">
    <property type="molecule type" value="protein"/>
</dbReference>
<dbReference type="Bgee" id="ENSG00000163206">
    <property type="expression patterns" value="Expressed in sperm and 114 other cell types or tissues"/>
</dbReference>
<dbReference type="ExpressionAtlas" id="P49901">
    <property type="expression patterns" value="baseline and differential"/>
</dbReference>
<dbReference type="GO" id="GO:0005737">
    <property type="term" value="C:cytoplasm"/>
    <property type="evidence" value="ECO:0000250"/>
    <property type="project" value="UniProtKB"/>
</dbReference>
<dbReference type="GO" id="GO:0031966">
    <property type="term" value="C:mitochondrial membrane"/>
    <property type="evidence" value="ECO:0007669"/>
    <property type="project" value="UniProtKB-SubCell"/>
</dbReference>
<dbReference type="GO" id="GO:0005739">
    <property type="term" value="C:mitochondrion"/>
    <property type="evidence" value="ECO:0006056"/>
    <property type="project" value="FlyBase"/>
</dbReference>
<dbReference type="GO" id="GO:0030317">
    <property type="term" value="P:flagellated sperm motility"/>
    <property type="evidence" value="ECO:0000250"/>
    <property type="project" value="UniProtKB"/>
</dbReference>
<dbReference type="GO" id="GO:0007341">
    <property type="term" value="P:penetration of zona pellucida"/>
    <property type="evidence" value="ECO:0000250"/>
    <property type="project" value="UniProtKB"/>
</dbReference>
<dbReference type="InterPro" id="IPR039347">
    <property type="entry name" value="SMCP"/>
</dbReference>
<dbReference type="PANTHER" id="PTHR35820">
    <property type="entry name" value="SPERM MITOCHONDRIAL-ASSOCIATED CYSTEINE-RICH PROTEIN"/>
    <property type="match status" value="1"/>
</dbReference>
<dbReference type="PANTHER" id="PTHR35820:SF1">
    <property type="entry name" value="SPERM MITOCHONDRIAL-ASSOCIATED CYSTEINE-RICH PROTEIN"/>
    <property type="match status" value="1"/>
</dbReference>
<protein>
    <recommendedName>
        <fullName>Sperm mitochondrial-associated cysteine-rich protein</fullName>
    </recommendedName>
</protein>
<evidence type="ECO:0000250" key="1"/>
<evidence type="ECO:0000256" key="2">
    <source>
        <dbReference type="SAM" id="MobiDB-lite"/>
    </source>
</evidence>
<evidence type="ECO:0000269" key="3">
    <source>
    </source>
</evidence>
<evidence type="ECO:0000305" key="4"/>
<evidence type="ECO:0000305" key="5">
    <source>
    </source>
</evidence>
<gene>
    <name type="primary">SMCP</name>
    <name type="synonym">MCS</name>
    <name type="synonym">MCSP</name>
</gene>
<reference key="1">
    <citation type="journal article" date="1996" name="Genomics">
        <title>Isolation, expression, and chromosomal localization of the human mitochondrial capsule selenoprotein gene (MCSP).</title>
        <authorList>
            <person name="Aho H."/>
            <person name="Schwemmer M."/>
            <person name="Tessmann D."/>
            <person name="Murphy D."/>
            <person name="Mattei M.-G."/>
            <person name="Engel W."/>
            <person name="Adham I.M."/>
        </authorList>
    </citation>
    <scope>NUCLEOTIDE SEQUENCE [GENOMIC DNA / MRNA]</scope>
    <scope>TISSUE SPECIFICITY</scope>
    <scope>DEVELOPMENTAL STAGE</scope>
    <source>
        <tissue>Testis</tissue>
    </source>
</reference>
<reference key="2">
    <citation type="journal article" date="2004" name="Genome Res.">
        <title>The status, quality, and expansion of the NIH full-length cDNA project: the Mammalian Gene Collection (MGC).</title>
        <authorList>
            <consortium name="The MGC Project Team"/>
        </authorList>
    </citation>
    <scope>NUCLEOTIDE SEQUENCE [LARGE SCALE MRNA]</scope>
    <source>
        <tissue>Testis</tissue>
    </source>
</reference>
<comment type="function">
    <text evidence="1">Involved in sperm motility. Its absence is associated with genetic background dependent male infertility. Infertility may be due to reduced sperm motility in the female reproductive tract and inability to penetrate the oocyte zona pellucida (By similarity).</text>
</comment>
<comment type="interaction">
    <interactant intactId="EBI-750494">
        <id>P49901</id>
    </interactant>
    <interactant intactId="EBI-1211484">
        <id>P05187</id>
        <label>ALPP</label>
    </interactant>
    <organismsDiffer>false</organismsDiffer>
    <experiments>3</experiments>
</comment>
<comment type="interaction">
    <interactant intactId="EBI-750494">
        <id>P49901</id>
    </interactant>
    <interactant intactId="EBI-725606">
        <id>Q9NWQ9</id>
        <label>C14orf119</label>
    </interactant>
    <organismsDiffer>false</organismsDiffer>
    <experiments>3</experiments>
</comment>
<comment type="interaction">
    <interactant intactId="EBI-750494">
        <id>P49901</id>
    </interactant>
    <interactant intactId="EBI-739580">
        <id>Q13137</id>
        <label>CALCOCO2</label>
    </interactant>
    <organismsDiffer>false</organismsDiffer>
    <experiments>3</experiments>
</comment>
<comment type="interaction">
    <interactant intactId="EBI-750494">
        <id>P49901</id>
    </interactant>
    <interactant intactId="EBI-8626304">
        <id>P0DN86</id>
        <label>CGB3</label>
    </interactant>
    <organismsDiffer>false</organismsDiffer>
    <experiments>3</experiments>
</comment>
<comment type="interaction">
    <interactant intactId="EBI-750494">
        <id>P49901</id>
    </interactant>
    <interactant intactId="EBI-12265122">
        <id>O75638-2</id>
        <label>CTAG2</label>
    </interactant>
    <organismsDiffer>false</organismsDiffer>
    <experiments>3</experiments>
</comment>
<comment type="interaction">
    <interactant intactId="EBI-750494">
        <id>P49901</id>
    </interactant>
    <interactant intactId="EBI-3867333">
        <id>A8MQ03</id>
        <label>CYSRT1</label>
    </interactant>
    <organismsDiffer>false</organismsDiffer>
    <experiments>6</experiments>
</comment>
<comment type="interaction">
    <interactant intactId="EBI-750494">
        <id>P49901</id>
    </interactant>
    <interactant intactId="EBI-349105">
        <id>P63167</id>
        <label>DYNLL1</label>
    </interactant>
    <organismsDiffer>false</organismsDiffer>
    <experiments>9</experiments>
</comment>
<comment type="interaction">
    <interactant intactId="EBI-750494">
        <id>P49901</id>
    </interactant>
    <interactant intactId="EBI-742371">
        <id>Q96FJ2</id>
        <label>DYNLL2</label>
    </interactant>
    <organismsDiffer>false</organismsDiffer>
    <experiments>3</experiments>
</comment>
<comment type="interaction">
    <interactant intactId="EBI-750494">
        <id>P49901</id>
    </interactant>
    <interactant intactId="EBI-618309">
        <id>Q08379</id>
        <label>GOLGA2</label>
    </interactant>
    <organismsDiffer>false</organismsDiffer>
    <experiments>3</experiments>
</comment>
<comment type="interaction">
    <interactant intactId="EBI-750494">
        <id>P49901</id>
    </interactant>
    <interactant intactId="EBI-747754">
        <id>P28799</id>
        <label>GRN</label>
    </interactant>
    <organismsDiffer>false</organismsDiffer>
    <experiments>3</experiments>
</comment>
<comment type="interaction">
    <interactant intactId="EBI-750494">
        <id>P49901</id>
    </interactant>
    <interactant intactId="EBI-11978177">
        <id>Q96NT3-2</id>
        <label>GUCD1</label>
    </interactant>
    <organismsDiffer>false</organismsDiffer>
    <experiments>3</experiments>
</comment>
<comment type="interaction">
    <interactant intactId="EBI-750494">
        <id>P49901</id>
    </interactant>
    <interactant intactId="EBI-947015">
        <id>P24592</id>
        <label>IGFBP6</label>
    </interactant>
    <organismsDiffer>false</organismsDiffer>
    <experiments>3</experiments>
</comment>
<comment type="interaction">
    <interactant intactId="EBI-750494">
        <id>P49901</id>
    </interactant>
    <interactant intactId="EBI-948001">
        <id>Q15323</id>
        <label>KRT31</label>
    </interactant>
    <organismsDiffer>false</organismsDiffer>
    <experiments>6</experiments>
</comment>
<comment type="interaction">
    <interactant intactId="EBI-750494">
        <id>P49901</id>
    </interactant>
    <interactant intactId="EBI-1047093">
        <id>O76011</id>
        <label>KRT34</label>
    </interactant>
    <organismsDiffer>false</organismsDiffer>
    <experiments>3</experiments>
</comment>
<comment type="interaction">
    <interactant intactId="EBI-750494">
        <id>P49901</id>
    </interactant>
    <interactant intactId="EBI-11959885">
        <id>Q07627</id>
        <label>KRTAP1-1</label>
    </interactant>
    <organismsDiffer>false</organismsDiffer>
    <experiments>3</experiments>
</comment>
<comment type="interaction">
    <interactant intactId="EBI-750494">
        <id>P49901</id>
    </interactant>
    <interactant intactId="EBI-11749135">
        <id>Q8IUG1</id>
        <label>KRTAP1-3</label>
    </interactant>
    <organismsDiffer>false</organismsDiffer>
    <experiments>3</experiments>
</comment>
<comment type="interaction">
    <interactant intactId="EBI-750494">
        <id>P49901</id>
    </interactant>
    <interactant intactId="EBI-11741292">
        <id>Q9BYS1</id>
        <label>KRTAP1-5</label>
    </interactant>
    <organismsDiffer>false</organismsDiffer>
    <experiments>3</experiments>
</comment>
<comment type="interaction">
    <interactant intactId="EBI-750494">
        <id>P49901</id>
    </interactant>
    <interactant intactId="EBI-10217483">
        <id>P60412</id>
        <label>KRTAP10-11</label>
    </interactant>
    <organismsDiffer>false</organismsDiffer>
    <experiments>3</experiments>
</comment>
<comment type="interaction">
    <interactant intactId="EBI-750494">
        <id>P49901</id>
    </interactant>
    <interactant intactId="EBI-10172150">
        <id>P60370</id>
        <label>KRTAP10-5</label>
    </interactant>
    <organismsDiffer>false</organismsDiffer>
    <experiments>3</experiments>
</comment>
<comment type="interaction">
    <interactant intactId="EBI-750494">
        <id>P49901</id>
    </interactant>
    <interactant intactId="EBI-10172290">
        <id>P60409</id>
        <label>KRTAP10-7</label>
    </interactant>
    <organismsDiffer>false</organismsDiffer>
    <experiments>6</experiments>
</comment>
<comment type="interaction">
    <interactant intactId="EBI-750494">
        <id>P49901</id>
    </interactant>
    <interactant intactId="EBI-10171774">
        <id>P60410</id>
        <label>KRTAP10-8</label>
    </interactant>
    <organismsDiffer>false</organismsDiffer>
    <experiments>9</experiments>
</comment>
<comment type="interaction">
    <interactant intactId="EBI-750494">
        <id>P49901</id>
    </interactant>
    <interactant intactId="EBI-10172052">
        <id>P60411</id>
        <label>KRTAP10-9</label>
    </interactant>
    <organismsDiffer>false</organismsDiffer>
    <experiments>8</experiments>
</comment>
<comment type="interaction">
    <interactant intactId="EBI-750494">
        <id>P49901</id>
    </interactant>
    <interactant intactId="EBI-10210845">
        <id>P59990</id>
        <label>KRTAP12-1</label>
    </interactant>
    <organismsDiffer>false</organismsDiffer>
    <experiments>3</experiments>
</comment>
<comment type="interaction">
    <interactant intactId="EBI-750494">
        <id>P49901</id>
    </interactant>
    <interactant intactId="EBI-10176396">
        <id>P60329</id>
        <label>KRTAP12-4</label>
    </interactant>
    <organismsDiffer>false</organismsDiffer>
    <experiments>3</experiments>
</comment>
<comment type="interaction">
    <interactant intactId="EBI-750494">
        <id>P49901</id>
    </interactant>
    <interactant intactId="EBI-34579671">
        <id>Q9BYQ7</id>
        <label>KRTAP4-1</label>
    </interactant>
    <organismsDiffer>false</organismsDiffer>
    <experiments>3</experiments>
</comment>
<comment type="interaction">
    <interactant intactId="EBI-750494">
        <id>P49901</id>
    </interactant>
    <interactant intactId="EBI-10302392">
        <id>Q9BYQ6</id>
        <label>KRTAP4-11</label>
    </interactant>
    <organismsDiffer>false</organismsDiffer>
    <experiments>6</experiments>
</comment>
<comment type="interaction">
    <interactant intactId="EBI-750494">
        <id>P49901</id>
    </interactant>
    <interactant intactId="EBI-739863">
        <id>Q9BQ66</id>
        <label>KRTAP4-12</label>
    </interactant>
    <organismsDiffer>false</organismsDiffer>
    <experiments>11</experiments>
</comment>
<comment type="interaction">
    <interactant intactId="EBI-750494">
        <id>P49901</id>
    </interactant>
    <interactant intactId="EBI-10172511">
        <id>Q9BYR5</id>
        <label>KRTAP4-2</label>
    </interactant>
    <organismsDiffer>false</organismsDiffer>
    <experiments>3</experiments>
</comment>
<comment type="interaction">
    <interactant intactId="EBI-750494">
        <id>P49901</id>
    </interactant>
    <interactant intactId="EBI-11958132">
        <id>Q9BYR3</id>
        <label>KRTAP4-4</label>
    </interactant>
    <organismsDiffer>false</organismsDiffer>
    <experiments>6</experiments>
</comment>
<comment type="interaction">
    <interactant intactId="EBI-750494">
        <id>P49901</id>
    </interactant>
    <interactant intactId="EBI-11993254">
        <id>Q9BYR2</id>
        <label>KRTAP4-5</label>
    </interactant>
    <organismsDiffer>false</organismsDiffer>
    <experiments>5</experiments>
</comment>
<comment type="interaction">
    <interactant intactId="EBI-750494">
        <id>P49901</id>
    </interactant>
    <interactant intactId="EBI-10302547">
        <id>Q9BYR0</id>
        <label>KRTAP4-7</label>
    </interactant>
    <organismsDiffer>false</organismsDiffer>
    <experiments>3</experiments>
</comment>
<comment type="interaction">
    <interactant intactId="EBI-750494">
        <id>P49901</id>
    </interactant>
    <interactant intactId="EBI-11993296">
        <id>Q6L8G4</id>
        <label>KRTAP5-11</label>
    </interactant>
    <organismsDiffer>false</organismsDiffer>
    <experiments>5</experiments>
</comment>
<comment type="interaction">
    <interactant intactId="EBI-750494">
        <id>P49901</id>
    </interactant>
    <interactant intactId="EBI-11958178">
        <id>Q701N4</id>
        <label>KRTAP5-2</label>
    </interactant>
    <organismsDiffer>false</organismsDiffer>
    <experiments>6</experiments>
</comment>
<comment type="interaction">
    <interactant intactId="EBI-750494">
        <id>P49901</id>
    </interactant>
    <interactant intactId="EBI-11974251">
        <id>Q6L8H2</id>
        <label>KRTAP5-3</label>
    </interactant>
    <organismsDiffer>false</organismsDiffer>
    <experiments>5</experiments>
</comment>
<comment type="interaction">
    <interactant intactId="EBI-750494">
        <id>P49901</id>
    </interactant>
    <interactant intactId="EBI-11963072">
        <id>Q6L8H1</id>
        <label>KRTAP5-4</label>
    </interactant>
    <organismsDiffer>false</organismsDiffer>
    <experiments>3</experiments>
</comment>
<comment type="interaction">
    <interactant intactId="EBI-750494">
        <id>P49901</id>
    </interactant>
    <interactant intactId="EBI-10250562">
        <id>Q6L8G9</id>
        <label>KRTAP5-6</label>
    </interactant>
    <organismsDiffer>false</organismsDiffer>
    <experiments>8</experiments>
</comment>
<comment type="interaction">
    <interactant intactId="EBI-750494">
        <id>P49901</id>
    </interactant>
    <interactant intactId="EBI-3958099">
        <id>P26371</id>
        <label>KRTAP5-9</label>
    </interactant>
    <organismsDiffer>false</organismsDiffer>
    <experiments>8</experiments>
</comment>
<comment type="interaction">
    <interactant intactId="EBI-750494">
        <id>P49901</id>
    </interactant>
    <interactant intactId="EBI-22311199">
        <id>Q3LI67</id>
        <label>KRTAP6-3</label>
    </interactant>
    <organismsDiffer>false</organismsDiffer>
    <experiments>3</experiments>
</comment>
<comment type="interaction">
    <interactant intactId="EBI-750494">
        <id>P49901</id>
    </interactant>
    <interactant intactId="EBI-1044640">
        <id>Q9BYQ4</id>
        <label>KRTAP9-2</label>
    </interactant>
    <organismsDiffer>false</organismsDiffer>
    <experiments>8</experiments>
</comment>
<comment type="interaction">
    <interactant intactId="EBI-750494">
        <id>P49901</id>
    </interactant>
    <interactant intactId="EBI-1043191">
        <id>Q9BYQ3</id>
        <label>KRTAP9-3</label>
    </interactant>
    <organismsDiffer>false</organismsDiffer>
    <experiments>6</experiments>
</comment>
<comment type="interaction">
    <interactant intactId="EBI-750494">
        <id>P49901</id>
    </interactant>
    <interactant intactId="EBI-10185730">
        <id>Q9BYQ2</id>
        <label>KRTAP9-4</label>
    </interactant>
    <organismsDiffer>false</organismsDiffer>
    <experiments>3</experiments>
</comment>
<comment type="interaction">
    <interactant intactId="EBI-750494">
        <id>P49901</id>
    </interactant>
    <interactant intactId="EBI-11958364">
        <id>Q9BYQ0</id>
        <label>KRTAP9-8</label>
    </interactant>
    <organismsDiffer>false</organismsDiffer>
    <experiments>6</experiments>
</comment>
<comment type="interaction">
    <interactant intactId="EBI-750494">
        <id>P49901</id>
    </interactant>
    <interactant intactId="EBI-11962058">
        <id>Q5T7P2</id>
        <label>LCE1A</label>
    </interactant>
    <organismsDiffer>false</organismsDiffer>
    <experiments>3</experiments>
</comment>
<comment type="interaction">
    <interactant intactId="EBI-750494">
        <id>P49901</id>
    </interactant>
    <interactant intactId="EBI-10245913">
        <id>Q5T7P3</id>
        <label>LCE1B</label>
    </interactant>
    <organismsDiffer>false</organismsDiffer>
    <experiments>3</experiments>
</comment>
<comment type="interaction">
    <interactant intactId="EBI-750494">
        <id>P49901</id>
    </interactant>
    <interactant intactId="EBI-11741311">
        <id>Q5T752</id>
        <label>LCE1D</label>
    </interactant>
    <organismsDiffer>false</organismsDiffer>
    <experiments>3</experiments>
</comment>
<comment type="interaction">
    <interactant intactId="EBI-750494">
        <id>P49901</id>
    </interactant>
    <interactant intactId="EBI-11955335">
        <id>Q5T753</id>
        <label>LCE1E</label>
    </interactant>
    <organismsDiffer>false</organismsDiffer>
    <experiments>3</experiments>
</comment>
<comment type="interaction">
    <interactant intactId="EBI-750494">
        <id>P49901</id>
    </interactant>
    <interactant intactId="EBI-11958008">
        <id>Q5T754</id>
        <label>LCE1F</label>
    </interactant>
    <organismsDiffer>false</organismsDiffer>
    <experiments>3</experiments>
</comment>
<comment type="interaction">
    <interactant intactId="EBI-750494">
        <id>P49901</id>
    </interactant>
    <interactant intactId="EBI-11973993">
        <id>Q5TA81</id>
        <label>LCE2C</label>
    </interactant>
    <organismsDiffer>false</organismsDiffer>
    <experiments>3</experiments>
</comment>
<comment type="interaction">
    <interactant intactId="EBI-750494">
        <id>P49901</id>
    </interactant>
    <interactant intactId="EBI-10246750">
        <id>Q5TA82</id>
        <label>LCE2D</label>
    </interactant>
    <organismsDiffer>false</organismsDiffer>
    <experiments>3</experiments>
</comment>
<comment type="interaction">
    <interactant intactId="EBI-750494">
        <id>P49901</id>
    </interactant>
    <interactant intactId="EBI-9394625">
        <id>Q5TA76</id>
        <label>LCE3A</label>
    </interactant>
    <organismsDiffer>false</organismsDiffer>
    <experiments>3</experiments>
</comment>
<comment type="interaction">
    <interactant intactId="EBI-750494">
        <id>P49901</id>
    </interactant>
    <interactant intactId="EBI-11974495">
        <id>Q5TA77</id>
        <label>LCE3B</label>
    </interactant>
    <organismsDiffer>false</organismsDiffer>
    <experiments>3</experiments>
</comment>
<comment type="interaction">
    <interactant intactId="EBI-750494">
        <id>P49901</id>
    </interactant>
    <interactant intactId="EBI-10246358">
        <id>Q5TA78</id>
        <label>LCE4A</label>
    </interactant>
    <organismsDiffer>false</organismsDiffer>
    <experiments>6</experiments>
</comment>
<comment type="interaction">
    <interactant intactId="EBI-750494">
        <id>P49901</id>
    </interactant>
    <interactant intactId="EBI-11955689">
        <id>Q5TCM9</id>
        <label>LCE5A</label>
    </interactant>
    <organismsDiffer>false</organismsDiffer>
    <experiments>3</experiments>
</comment>
<comment type="interaction">
    <interactant intactId="EBI-750494">
        <id>P49901</id>
    </interactant>
    <interactant intactId="EBI-2683507">
        <id>Q8N5G2</id>
        <label>MACO1</label>
    </interactant>
    <organismsDiffer>false</organismsDiffer>
    <experiments>3</experiments>
</comment>
<comment type="interaction">
    <interactant intactId="EBI-750494">
        <id>P49901</id>
    </interactant>
    <interactant intactId="EBI-12015462">
        <id>P07438</id>
        <label>MT1B</label>
    </interactant>
    <organismsDiffer>false</organismsDiffer>
    <experiments>3</experiments>
</comment>
<comment type="interaction">
    <interactant intactId="EBI-750494">
        <id>P49901</id>
    </interactant>
    <interactant intactId="EBI-3911571">
        <id>Q8N339</id>
        <label>MT1M</label>
    </interactant>
    <organismsDiffer>false</organismsDiffer>
    <experiments>3</experiments>
</comment>
<comment type="interaction">
    <interactant intactId="EBI-750494">
        <id>P49901</id>
    </interactant>
    <interactant intactId="EBI-945833">
        <id>Q7Z3S9</id>
        <label>NOTCH2NLA</label>
    </interactant>
    <organismsDiffer>false</organismsDiffer>
    <experiments>4</experiments>
</comment>
<comment type="interaction">
    <interactant intactId="EBI-750494">
        <id>P49901</id>
    </interactant>
    <interactant intactId="EBI-22310682">
        <id>P0DPK4</id>
        <label>NOTCH2NLC</label>
    </interactant>
    <organismsDiffer>false</organismsDiffer>
    <experiments>3</experiments>
</comment>
<comment type="interaction">
    <interactant intactId="EBI-750494">
        <id>P49901</id>
    </interactant>
    <interactant intactId="EBI-11956269">
        <id>Q92824-2</id>
        <label>PCSK5</label>
    </interactant>
    <organismsDiffer>false</organismsDiffer>
    <experiments>3</experiments>
</comment>
<comment type="interaction">
    <interactant intactId="EBI-750494">
        <id>P49901</id>
    </interactant>
    <interactant intactId="EBI-949255">
        <id>Q58EX7</id>
        <label>PLEKHG4</label>
    </interactant>
    <organismsDiffer>false</organismsDiffer>
    <experiments>3</experiments>
</comment>
<comment type="interaction">
    <interactant intactId="EBI-750494">
        <id>P49901</id>
    </interactant>
    <interactant intactId="EBI-750734">
        <id>Q9NRY6</id>
        <label>PLSCR3</label>
    </interactant>
    <organismsDiffer>false</organismsDiffer>
    <experiments>3</experiments>
</comment>
<comment type="interaction">
    <interactant intactId="EBI-750494">
        <id>P49901</id>
    </interactant>
    <interactant intactId="EBI-5235602">
        <id>Q86WC6</id>
        <label>PPP1R27</label>
    </interactant>
    <organismsDiffer>false</organismsDiffer>
    <experiments>3</experiments>
</comment>
<comment type="interaction">
    <interactant intactId="EBI-750494">
        <id>P49901</id>
    </interactant>
    <interactant intactId="EBI-722161">
        <id>P30044</id>
        <label>PRDX5</label>
    </interactant>
    <organismsDiffer>false</organismsDiffer>
    <experiments>3</experiments>
</comment>
<comment type="interaction">
    <interactant intactId="EBI-750494">
        <id>P49901</id>
    </interactant>
    <interactant intactId="EBI-3918154">
        <id>Q9UGC6</id>
        <label>RGS17</label>
    </interactant>
    <organismsDiffer>false</organismsDiffer>
    <experiments>3</experiments>
</comment>
<comment type="interaction">
    <interactant intactId="EBI-750494">
        <id>P49901</id>
    </interactant>
    <interactant intactId="EBI-1051105">
        <id>Q92504</id>
        <label>SLC39A7</label>
    </interactant>
    <organismsDiffer>false</organismsDiffer>
    <experiments>3</experiments>
</comment>
<comment type="interaction">
    <interactant intactId="EBI-750494">
        <id>P49901</id>
    </interactant>
    <interactant intactId="EBI-3866665">
        <id>O43609</id>
        <label>SPRY1</label>
    </interactant>
    <organismsDiffer>false</organismsDiffer>
    <experiments>3</experiments>
</comment>
<comment type="interaction">
    <interactant intactId="EBI-750494">
        <id>P49901</id>
    </interactant>
    <interactant intactId="EBI-533224">
        <id>P15884</id>
        <label>TCF4</label>
    </interactant>
    <organismsDiffer>false</organismsDiffer>
    <experiments>3</experiments>
</comment>
<comment type="interaction">
    <interactant intactId="EBI-750494">
        <id>P49901</id>
    </interactant>
    <interactant intactId="EBI-5235829">
        <id>Q8IWZ5</id>
        <label>TRIM42</label>
    </interactant>
    <organismsDiffer>false</organismsDiffer>
    <experiments>3</experiments>
</comment>
<comment type="interaction">
    <interactant intactId="EBI-750494">
        <id>P49901</id>
    </interactant>
    <interactant intactId="EBI-607755">
        <id>Q9BZL1</id>
        <label>UBL5</label>
    </interactant>
    <organismsDiffer>false</organismsDiffer>
    <experiments>3</experiments>
</comment>
<comment type="interaction">
    <interactant intactId="EBI-750494">
        <id>P49901</id>
    </interactant>
    <interactant intactId="EBI-10249550">
        <id>Q6EMK4</id>
        <label>VASN</label>
    </interactant>
    <organismsDiffer>false</organismsDiffer>
    <experiments>3</experiments>
</comment>
<comment type="subcellular location">
    <subcellularLocation>
        <location>Cytoplasm</location>
    </subcellularLocation>
    <subcellularLocation>
        <location evidence="4">Mitochondrion membrane</location>
        <topology evidence="4">Peripheral membrane protein</topology>
        <orientation evidence="4">Cytoplasmic side</orientation>
    </subcellularLocation>
    <text evidence="1">Becomes associated with the spermatid mitochondrion capsule at step 16 of spermatogenesis.</text>
</comment>
<comment type="tissue specificity">
    <text evidence="3">Testis. Is selectively expressed in the spermatids of seminiferous tubules.</text>
</comment>
<comment type="developmental stage">
    <text evidence="3">Expressed in postmeiotic cells.</text>
</comment>
<comment type="caution">
    <text evidence="5">Was originally thought to be a selenoprotein and was known as sperm mitochondrial capsule selenoprotein.</text>
</comment>
<feature type="chain" id="PRO_0000096307" description="Sperm mitochondrial-associated cysteine-rich protein">
    <location>
        <begin position="1"/>
        <end position="116"/>
    </location>
</feature>
<feature type="repeat" description="1">
    <location>
        <begin position="6"/>
        <end position="13"/>
    </location>
</feature>
<feature type="repeat" description="2">
    <location>
        <begin position="14"/>
        <end position="21"/>
    </location>
</feature>
<feature type="repeat" description="3">
    <location>
        <begin position="30"/>
        <end position="37"/>
    </location>
</feature>
<feature type="repeat" description="4">
    <location>
        <begin position="38"/>
        <end position="45"/>
    </location>
</feature>
<feature type="repeat" description="5">
    <location>
        <begin position="46"/>
        <end position="53"/>
    </location>
</feature>
<feature type="repeat" description="6">
    <location>
        <begin position="54"/>
        <end position="61"/>
    </location>
</feature>
<feature type="repeat" description="7">
    <location>
        <begin position="62"/>
        <end position="68"/>
    </location>
</feature>
<feature type="region of interest" description="7 X 7 (OR 8) AA approximate repeats">
    <location>
        <begin position="6"/>
        <end position="68"/>
    </location>
</feature>
<feature type="region of interest" description="Disordered" evidence="2">
    <location>
        <begin position="80"/>
        <end position="116"/>
    </location>
</feature>
<feature type="compositionally biased region" description="Low complexity" evidence="2">
    <location>
        <begin position="93"/>
        <end position="104"/>
    </location>
</feature>
<feature type="compositionally biased region" description="Polar residues" evidence="2">
    <location>
        <begin position="105"/>
        <end position="116"/>
    </location>
</feature>
<feature type="sequence conflict" description="In Ref. 1; CAA62000/CAD56487." evidence="4" ref="1">
    <original>P</original>
    <variation>A</variation>
    <location>
        <position position="63"/>
    </location>
</feature>
<organism>
    <name type="scientific">Homo sapiens</name>
    <name type="common">Human</name>
    <dbReference type="NCBI Taxonomy" id="9606"/>
    <lineage>
        <taxon>Eukaryota</taxon>
        <taxon>Metazoa</taxon>
        <taxon>Chordata</taxon>
        <taxon>Craniata</taxon>
        <taxon>Vertebrata</taxon>
        <taxon>Euteleostomi</taxon>
        <taxon>Mammalia</taxon>
        <taxon>Eutheria</taxon>
        <taxon>Euarchontoglires</taxon>
        <taxon>Primates</taxon>
        <taxon>Haplorrhini</taxon>
        <taxon>Catarrhini</taxon>
        <taxon>Hominidae</taxon>
        <taxon>Homo</taxon>
    </lineage>
</organism>
<keyword id="KW-0963">Cytoplasm</keyword>
<keyword id="KW-0278">Fertilization</keyword>
<keyword id="KW-0472">Membrane</keyword>
<keyword id="KW-0496">Mitochondrion</keyword>
<keyword id="KW-1267">Proteomics identification</keyword>
<keyword id="KW-1185">Reference proteome</keyword>
<keyword id="KW-0677">Repeat</keyword>
<proteinExistence type="evidence at protein level"/>
<name>MCSP_HUMAN</name>